<feature type="chain" id="PRO_0000328165" description="LIM domain-containing protein B">
    <location>
        <begin position="1"/>
        <end position="553"/>
    </location>
</feature>
<feature type="domain" description="LIM zinc-binding 1" evidence="1">
    <location>
        <begin position="205"/>
        <end position="262"/>
    </location>
</feature>
<feature type="domain" description="LIM zinc-binding 2" evidence="1">
    <location>
        <begin position="263"/>
        <end position="322"/>
    </location>
</feature>
<feature type="domain" description="LIM zinc-binding 3" evidence="1">
    <location>
        <begin position="328"/>
        <end position="387"/>
    </location>
</feature>
<feature type="domain" description="LIM zinc-binding 4" evidence="1">
    <location>
        <begin position="388"/>
        <end position="447"/>
    </location>
</feature>
<feature type="domain" description="LIM zinc-binding 5" evidence="1">
    <location>
        <begin position="448"/>
        <end position="505"/>
    </location>
</feature>
<feature type="region of interest" description="Disordered" evidence="2">
    <location>
        <begin position="43"/>
        <end position="115"/>
    </location>
</feature>
<feature type="region of interest" description="Disordered" evidence="2">
    <location>
        <begin position="534"/>
        <end position="553"/>
    </location>
</feature>
<feature type="compositionally biased region" description="Low complexity" evidence="2">
    <location>
        <begin position="99"/>
        <end position="114"/>
    </location>
</feature>
<feature type="sequence conflict" description="In Ref. 1; AAF05849." evidence="5" ref="1">
    <location>
        <begin position="143"/>
        <end position="146"/>
    </location>
</feature>
<keyword id="KW-0145">Chemotaxis</keyword>
<keyword id="KW-0963">Cytoplasm</keyword>
<keyword id="KW-0206">Cytoskeleton</keyword>
<keyword id="KW-0440">LIM domain</keyword>
<keyword id="KW-0479">Metal-binding</keyword>
<keyword id="KW-1185">Reference proteome</keyword>
<keyword id="KW-0677">Repeat</keyword>
<keyword id="KW-0862">Zinc</keyword>
<comment type="function">
    <text evidence="3 4">Regulates and controls rearrangements of the actin cytoskeleton. Required for tip formation, morphogenesis, cell adhesion and motility, chemotaxis and aggregates formation. May function downstream of paxB.</text>
</comment>
<comment type="subcellular location">
    <subcellularLocation>
        <location evidence="3">Cytoplasm</location>
        <location evidence="3">Cell cortex</location>
    </subcellularLocation>
    <subcellularLocation>
        <location evidence="3">Cytoplasm</location>
        <location evidence="3">Cytoskeleton</location>
    </subcellularLocation>
</comment>
<comment type="developmental stage">
    <text evidence="3">Expressed after 4 hours of development, reaches a peak at 8 to 12 hours, and then decreases.</text>
</comment>
<comment type="disruption phenotype">
    <text evidence="3">Cells exhibit an aberrant actin cytoskeleton and numerous F-actin-enriched microspikes. Cells aggregate poorly and aggregates arrest at the mound stage. They exhibit poor adhesion, form weak cell-cell agglomerates in suspension, do not polarize in chemoattractant gradient and move very poorly.</text>
</comment>
<reference key="1">
    <citation type="journal article" date="2000" name="Mol. Biol. Cell">
        <title>The Dictyostelium LIM domain-containing protein LIM2 is essential for proper chemotaxis and morphogenesis.</title>
        <authorList>
            <person name="Chien S."/>
            <person name="Chung C.Y."/>
            <person name="Sukumaran S."/>
            <person name="Osborne N."/>
            <person name="Lee S."/>
            <person name="Ellsworth C."/>
            <person name="McNally J.G."/>
            <person name="Firtel R.A."/>
        </authorList>
    </citation>
    <scope>NUCLEOTIDE SEQUENCE [MRNA]</scope>
    <scope>FUNCTION</scope>
    <scope>SUBCELLULAR LOCATION</scope>
    <scope>DEVELOPMENTAL STAGE</scope>
    <scope>DISRUPTION PHENOTYPE</scope>
    <source>
        <strain>AX3-1</strain>
    </source>
</reference>
<reference key="2">
    <citation type="journal article" date="2005" name="Nature">
        <title>The genome of the social amoeba Dictyostelium discoideum.</title>
        <authorList>
            <person name="Eichinger L."/>
            <person name="Pachebat J.A."/>
            <person name="Gloeckner G."/>
            <person name="Rajandream M.A."/>
            <person name="Sucgang R."/>
            <person name="Berriman M."/>
            <person name="Song J."/>
            <person name="Olsen R."/>
            <person name="Szafranski K."/>
            <person name="Xu Q."/>
            <person name="Tunggal B."/>
            <person name="Kummerfeld S."/>
            <person name="Madera M."/>
            <person name="Konfortov B.A."/>
            <person name="Rivero F."/>
            <person name="Bankier A.T."/>
            <person name="Lehmann R."/>
            <person name="Hamlin N."/>
            <person name="Davies R."/>
            <person name="Gaudet P."/>
            <person name="Fey P."/>
            <person name="Pilcher K."/>
            <person name="Chen G."/>
            <person name="Saunders D."/>
            <person name="Sodergren E.J."/>
            <person name="Davis P."/>
            <person name="Kerhornou A."/>
            <person name="Nie X."/>
            <person name="Hall N."/>
            <person name="Anjard C."/>
            <person name="Hemphill L."/>
            <person name="Bason N."/>
            <person name="Farbrother P."/>
            <person name="Desany B."/>
            <person name="Just E."/>
            <person name="Morio T."/>
            <person name="Rost R."/>
            <person name="Churcher C.M."/>
            <person name="Cooper J."/>
            <person name="Haydock S."/>
            <person name="van Driessche N."/>
            <person name="Cronin A."/>
            <person name="Goodhead I."/>
            <person name="Muzny D.M."/>
            <person name="Mourier T."/>
            <person name="Pain A."/>
            <person name="Lu M."/>
            <person name="Harper D."/>
            <person name="Lindsay R."/>
            <person name="Hauser H."/>
            <person name="James K.D."/>
            <person name="Quiles M."/>
            <person name="Madan Babu M."/>
            <person name="Saito T."/>
            <person name="Buchrieser C."/>
            <person name="Wardroper A."/>
            <person name="Felder M."/>
            <person name="Thangavelu M."/>
            <person name="Johnson D."/>
            <person name="Knights A."/>
            <person name="Loulseged H."/>
            <person name="Mungall K.L."/>
            <person name="Oliver K."/>
            <person name="Price C."/>
            <person name="Quail M.A."/>
            <person name="Urushihara H."/>
            <person name="Hernandez J."/>
            <person name="Rabbinowitsch E."/>
            <person name="Steffen D."/>
            <person name="Sanders M."/>
            <person name="Ma J."/>
            <person name="Kohara Y."/>
            <person name="Sharp S."/>
            <person name="Simmonds M.N."/>
            <person name="Spiegler S."/>
            <person name="Tivey A."/>
            <person name="Sugano S."/>
            <person name="White B."/>
            <person name="Walker D."/>
            <person name="Woodward J.R."/>
            <person name="Winckler T."/>
            <person name="Tanaka Y."/>
            <person name="Shaulsky G."/>
            <person name="Schleicher M."/>
            <person name="Weinstock G.M."/>
            <person name="Rosenthal A."/>
            <person name="Cox E.C."/>
            <person name="Chisholm R.L."/>
            <person name="Gibbs R.A."/>
            <person name="Loomis W.F."/>
            <person name="Platzer M."/>
            <person name="Kay R.R."/>
            <person name="Williams J.G."/>
            <person name="Dear P.H."/>
            <person name="Noegel A.A."/>
            <person name="Barrell B.G."/>
            <person name="Kuspa A."/>
        </authorList>
    </citation>
    <scope>NUCLEOTIDE SEQUENCE [LARGE SCALE GENOMIC DNA]</scope>
    <source>
        <strain>AX4</strain>
    </source>
</reference>
<reference key="3">
    <citation type="journal article" date="2005" name="J. Cell Sci.">
        <title>Paxillin is required for cell-substrate adhesion, cell sorting and slug migration during Dictyostelium development.</title>
        <authorList>
            <person name="Bukharova T."/>
            <person name="Weijer G."/>
            <person name="Bosgraaf L."/>
            <person name="Dormann D."/>
            <person name="van Haastert P.J."/>
            <person name="Weijer C.J."/>
        </authorList>
    </citation>
    <scope>FUNCTION</scope>
</reference>
<gene>
    <name type="primary">limB</name>
    <name type="synonym">lim2</name>
    <name type="synonym">paxA</name>
    <name type="ORF">DDB_G0284863</name>
</gene>
<name>LIMB_DICDI</name>
<evidence type="ECO:0000255" key="1">
    <source>
        <dbReference type="PROSITE-ProRule" id="PRU00125"/>
    </source>
</evidence>
<evidence type="ECO:0000256" key="2">
    <source>
        <dbReference type="SAM" id="MobiDB-lite"/>
    </source>
</evidence>
<evidence type="ECO:0000269" key="3">
    <source>
    </source>
</evidence>
<evidence type="ECO:0000269" key="4">
    <source>
    </source>
</evidence>
<evidence type="ECO:0000305" key="5"/>
<organism>
    <name type="scientific">Dictyostelium discoideum</name>
    <name type="common">Social amoeba</name>
    <dbReference type="NCBI Taxonomy" id="44689"/>
    <lineage>
        <taxon>Eukaryota</taxon>
        <taxon>Amoebozoa</taxon>
        <taxon>Evosea</taxon>
        <taxon>Eumycetozoa</taxon>
        <taxon>Dictyostelia</taxon>
        <taxon>Dictyosteliales</taxon>
        <taxon>Dictyosteliaceae</taxon>
        <taxon>Dictyostelium</taxon>
    </lineage>
</organism>
<accession>Q54NW4</accession>
<accession>Q9U628</accession>
<sequence length="553" mass="60341">MANKNVLSEMDDLMAELGLVETTATPTSDQIKQPQQETAPTYLTYKDPNVSTGPGGDFRNLNDNNGGISRGPGLMSTGPGLVSTGPGLMSTGPGLMSKGPGLPNNSINNNISNNNGGGISSGPGLSFGVSSGVSSGVSSGVSSGVSSGVTLVAQNHLARQPSPPLNSQQQQQQQLPTYLDGVGTLQPISLAATTPDGRVVKANGPICGACGDMIIGVCTNALGRSYHPEHFVCTYCKLPFSGSFIEHEEKLYCENDYLELFSPRCFACIKPIEDTCINALGNRYHPECFSCSGCGDKLRGKPYKEEDGEVYCNTCKIARQKRLAAKSEICSKCKLPITGEYIILQGQPVHSEHYRCEECGCEFNVGKTCHEYEGRLYCYEDYQKQILNICGACSKPIVGRSITALGKVWHPEHFTCTTCQVPFAGSAFREHAGKPYCESHYHQFFGRQCFKCSKPVVDTGVEVFGKIYHREHFTCTGCECVLGKEIMEWDGKPLCFKCFDALPKEVRKRIKEKKAGDKKAEAYREKLAKKEAKELKKERERAAKEKEKESKAK</sequence>
<dbReference type="EMBL" id="AF198250">
    <property type="protein sequence ID" value="AAF05849.1"/>
    <property type="molecule type" value="mRNA"/>
</dbReference>
<dbReference type="EMBL" id="AAFI02000073">
    <property type="protein sequence ID" value="EAL64895.1"/>
    <property type="molecule type" value="Genomic_DNA"/>
</dbReference>
<dbReference type="RefSeq" id="XP_639953.1">
    <property type="nucleotide sequence ID" value="XM_634861.1"/>
</dbReference>
<dbReference type="SMR" id="Q54NW4"/>
<dbReference type="FunCoup" id="Q54NW4">
    <property type="interactions" value="18"/>
</dbReference>
<dbReference type="STRING" id="44689.Q54NW4"/>
<dbReference type="PaxDb" id="44689-DDB0191245"/>
<dbReference type="EnsemblProtists" id="EAL64895">
    <property type="protein sequence ID" value="EAL64895"/>
    <property type="gene ID" value="DDB_G0284863"/>
</dbReference>
<dbReference type="GeneID" id="8624865"/>
<dbReference type="KEGG" id="ddi:DDB_G0284863"/>
<dbReference type="dictyBase" id="DDB_G0284863">
    <property type="gene designation" value="limB"/>
</dbReference>
<dbReference type="VEuPathDB" id="AmoebaDB:DDB_G0284863"/>
<dbReference type="eggNOG" id="KOG2272">
    <property type="taxonomic scope" value="Eukaryota"/>
</dbReference>
<dbReference type="HOGENOM" id="CLU_492984_0_0_1"/>
<dbReference type="InParanoid" id="Q54NW4"/>
<dbReference type="OMA" id="RYVCHKC"/>
<dbReference type="PhylomeDB" id="Q54NW4"/>
<dbReference type="Reactome" id="R-DDI-8849471">
    <property type="pathway name" value="PTK6 Regulates RHO GTPases, RAS GTPase and MAP kinases"/>
</dbReference>
<dbReference type="PRO" id="PR:Q54NW4"/>
<dbReference type="Proteomes" id="UP000002195">
    <property type="component" value="Chromosome 4"/>
</dbReference>
<dbReference type="GO" id="GO:0005938">
    <property type="term" value="C:cell cortex"/>
    <property type="evidence" value="ECO:0000314"/>
    <property type="project" value="dictyBase"/>
</dbReference>
<dbReference type="GO" id="GO:0005856">
    <property type="term" value="C:cytoskeleton"/>
    <property type="evidence" value="ECO:0007669"/>
    <property type="project" value="UniProtKB-SubCell"/>
</dbReference>
<dbReference type="GO" id="GO:0008270">
    <property type="term" value="F:zinc ion binding"/>
    <property type="evidence" value="ECO:0000250"/>
    <property type="project" value="dictyBase"/>
</dbReference>
<dbReference type="GO" id="GO:0031152">
    <property type="term" value="P:aggregation involved in sorocarp development"/>
    <property type="evidence" value="ECO:0000315"/>
    <property type="project" value="dictyBase"/>
</dbReference>
<dbReference type="GO" id="GO:0032060">
    <property type="term" value="P:bleb assembly"/>
    <property type="evidence" value="ECO:0000315"/>
    <property type="project" value="dictyBase"/>
</dbReference>
<dbReference type="GO" id="GO:0007155">
    <property type="term" value="P:cell adhesion"/>
    <property type="evidence" value="ECO:0000315"/>
    <property type="project" value="dictyBase"/>
</dbReference>
<dbReference type="GO" id="GO:0006935">
    <property type="term" value="P:chemotaxis"/>
    <property type="evidence" value="ECO:0000315"/>
    <property type="project" value="dictyBase"/>
</dbReference>
<dbReference type="GO" id="GO:0031154">
    <property type="term" value="P:culmination involved in sorocarp development"/>
    <property type="evidence" value="ECO:0000315"/>
    <property type="project" value="dictyBase"/>
</dbReference>
<dbReference type="CDD" id="cd08368">
    <property type="entry name" value="LIM"/>
    <property type="match status" value="2"/>
</dbReference>
<dbReference type="CDD" id="cd09334">
    <property type="entry name" value="LIM4_PINCH"/>
    <property type="match status" value="1"/>
</dbReference>
<dbReference type="FunFam" id="2.10.110.10:FF:000154">
    <property type="entry name" value="LIM and senescent cell antigen-like-containing domain protein 1"/>
    <property type="match status" value="2"/>
</dbReference>
<dbReference type="Gene3D" id="2.10.110.10">
    <property type="entry name" value="Cysteine Rich Protein"/>
    <property type="match status" value="5"/>
</dbReference>
<dbReference type="InterPro" id="IPR017351">
    <property type="entry name" value="PINCH-1-4-like"/>
</dbReference>
<dbReference type="InterPro" id="IPR001781">
    <property type="entry name" value="Znf_LIM"/>
</dbReference>
<dbReference type="PANTHER" id="PTHR24210">
    <property type="entry name" value="LIM DOMAIN-CONTAINING PROTEIN"/>
    <property type="match status" value="1"/>
</dbReference>
<dbReference type="PANTHER" id="PTHR24210:SF0">
    <property type="entry name" value="LIM DOMAIN-CONTAINING PROTEIN"/>
    <property type="match status" value="1"/>
</dbReference>
<dbReference type="Pfam" id="PF00412">
    <property type="entry name" value="LIM"/>
    <property type="match status" value="5"/>
</dbReference>
<dbReference type="SMART" id="SM00132">
    <property type="entry name" value="LIM"/>
    <property type="match status" value="5"/>
</dbReference>
<dbReference type="SUPFAM" id="SSF57716">
    <property type="entry name" value="Glucocorticoid receptor-like (DNA-binding domain)"/>
    <property type="match status" value="5"/>
</dbReference>
<dbReference type="PROSITE" id="PS00478">
    <property type="entry name" value="LIM_DOMAIN_1"/>
    <property type="match status" value="4"/>
</dbReference>
<dbReference type="PROSITE" id="PS50023">
    <property type="entry name" value="LIM_DOMAIN_2"/>
    <property type="match status" value="5"/>
</dbReference>
<proteinExistence type="evidence at transcript level"/>
<protein>
    <recommendedName>
        <fullName>LIM domain-containing protein B</fullName>
    </recommendedName>
    <alternativeName>
        <fullName>Paxillin-A</fullName>
    </alternativeName>
</protein>